<reference key="1">
    <citation type="journal article" date="2008" name="Genome Res.">
        <title>Chlamydia trachomatis: genome sequence analysis of lymphogranuloma venereum isolates.</title>
        <authorList>
            <person name="Thomson N.R."/>
            <person name="Holden M.T.G."/>
            <person name="Carder C."/>
            <person name="Lennard N."/>
            <person name="Lockey S.J."/>
            <person name="Marsh P."/>
            <person name="Skipp P."/>
            <person name="O'Connor C.D."/>
            <person name="Goodhead I."/>
            <person name="Norbertzcak H."/>
            <person name="Harris B."/>
            <person name="Ormond D."/>
            <person name="Rance R."/>
            <person name="Quail M.A."/>
            <person name="Parkhill J."/>
            <person name="Stephens R.S."/>
            <person name="Clarke I.N."/>
        </authorList>
    </citation>
    <scope>NUCLEOTIDE SEQUENCE [LARGE SCALE GENOMIC DNA]</scope>
    <source>
        <strain>ATCC VR-902B / DSM 19102 / 434/Bu</strain>
    </source>
</reference>
<comment type="function">
    <text evidence="1">Catalyzes the 2-thiolation of uridine at the wobble position (U34) of tRNA, leading to the formation of s(2)U34.</text>
</comment>
<comment type="catalytic activity">
    <reaction evidence="1">
        <text>S-sulfanyl-L-cysteinyl-[protein] + uridine(34) in tRNA + AH2 + ATP = 2-thiouridine(34) in tRNA + L-cysteinyl-[protein] + A + AMP + diphosphate + H(+)</text>
        <dbReference type="Rhea" id="RHEA:47032"/>
        <dbReference type="Rhea" id="RHEA-COMP:10131"/>
        <dbReference type="Rhea" id="RHEA-COMP:11726"/>
        <dbReference type="Rhea" id="RHEA-COMP:11727"/>
        <dbReference type="Rhea" id="RHEA-COMP:11728"/>
        <dbReference type="ChEBI" id="CHEBI:13193"/>
        <dbReference type="ChEBI" id="CHEBI:15378"/>
        <dbReference type="ChEBI" id="CHEBI:17499"/>
        <dbReference type="ChEBI" id="CHEBI:29950"/>
        <dbReference type="ChEBI" id="CHEBI:30616"/>
        <dbReference type="ChEBI" id="CHEBI:33019"/>
        <dbReference type="ChEBI" id="CHEBI:61963"/>
        <dbReference type="ChEBI" id="CHEBI:65315"/>
        <dbReference type="ChEBI" id="CHEBI:87170"/>
        <dbReference type="ChEBI" id="CHEBI:456215"/>
        <dbReference type="EC" id="2.8.1.13"/>
    </reaction>
</comment>
<comment type="subcellular location">
    <subcellularLocation>
        <location evidence="1">Cytoplasm</location>
    </subcellularLocation>
</comment>
<comment type="similarity">
    <text evidence="1">Belongs to the MnmA/TRMU family.</text>
</comment>
<keyword id="KW-0067">ATP-binding</keyword>
<keyword id="KW-0963">Cytoplasm</keyword>
<keyword id="KW-1015">Disulfide bond</keyword>
<keyword id="KW-0547">Nucleotide-binding</keyword>
<keyword id="KW-0694">RNA-binding</keyword>
<keyword id="KW-0808">Transferase</keyword>
<keyword id="KW-0819">tRNA processing</keyword>
<keyword id="KW-0820">tRNA-binding</keyword>
<dbReference type="EC" id="2.8.1.13" evidence="1"/>
<dbReference type="EMBL" id="AM884176">
    <property type="protein sequence ID" value="CAP03979.1"/>
    <property type="molecule type" value="Genomic_DNA"/>
</dbReference>
<dbReference type="RefSeq" id="WP_009873701.1">
    <property type="nucleotide sequence ID" value="NC_010287.1"/>
</dbReference>
<dbReference type="RefSeq" id="YP_001654616.1">
    <property type="nucleotide sequence ID" value="NC_010287.1"/>
</dbReference>
<dbReference type="SMR" id="B0B7K3"/>
<dbReference type="KEGG" id="ctb:CTL0539"/>
<dbReference type="PATRIC" id="fig|471472.4.peg.579"/>
<dbReference type="HOGENOM" id="CLU_035188_1_0_0"/>
<dbReference type="Proteomes" id="UP001154402">
    <property type="component" value="Chromosome"/>
</dbReference>
<dbReference type="GO" id="GO:0005737">
    <property type="term" value="C:cytoplasm"/>
    <property type="evidence" value="ECO:0007669"/>
    <property type="project" value="UniProtKB-SubCell"/>
</dbReference>
<dbReference type="GO" id="GO:0005524">
    <property type="term" value="F:ATP binding"/>
    <property type="evidence" value="ECO:0007669"/>
    <property type="project" value="UniProtKB-KW"/>
</dbReference>
<dbReference type="GO" id="GO:0000049">
    <property type="term" value="F:tRNA binding"/>
    <property type="evidence" value="ECO:0007669"/>
    <property type="project" value="UniProtKB-KW"/>
</dbReference>
<dbReference type="GO" id="GO:0103016">
    <property type="term" value="F:tRNA-uridine 2-sulfurtransferase activity"/>
    <property type="evidence" value="ECO:0007669"/>
    <property type="project" value="UniProtKB-EC"/>
</dbReference>
<dbReference type="GO" id="GO:0002143">
    <property type="term" value="P:tRNA wobble position uridine thiolation"/>
    <property type="evidence" value="ECO:0007669"/>
    <property type="project" value="TreeGrafter"/>
</dbReference>
<dbReference type="CDD" id="cd01998">
    <property type="entry name" value="MnmA_TRMU-like"/>
    <property type="match status" value="1"/>
</dbReference>
<dbReference type="FunFam" id="2.30.30.280:FF:000001">
    <property type="entry name" value="tRNA-specific 2-thiouridylase MnmA"/>
    <property type="match status" value="1"/>
</dbReference>
<dbReference type="FunFam" id="2.40.30.10:FF:000023">
    <property type="entry name" value="tRNA-specific 2-thiouridylase MnmA"/>
    <property type="match status" value="1"/>
</dbReference>
<dbReference type="FunFam" id="3.40.50.620:FF:000115">
    <property type="entry name" value="tRNA-specific 2-thiouridylase MnmA"/>
    <property type="match status" value="1"/>
</dbReference>
<dbReference type="Gene3D" id="2.30.30.280">
    <property type="entry name" value="Adenine nucleotide alpha hydrolases-like domains"/>
    <property type="match status" value="1"/>
</dbReference>
<dbReference type="Gene3D" id="3.40.50.620">
    <property type="entry name" value="HUPs"/>
    <property type="match status" value="1"/>
</dbReference>
<dbReference type="Gene3D" id="2.40.30.10">
    <property type="entry name" value="Translation factors"/>
    <property type="match status" value="1"/>
</dbReference>
<dbReference type="HAMAP" id="MF_00144">
    <property type="entry name" value="tRNA_thiouridyl_MnmA"/>
    <property type="match status" value="1"/>
</dbReference>
<dbReference type="InterPro" id="IPR004506">
    <property type="entry name" value="MnmA-like"/>
</dbReference>
<dbReference type="InterPro" id="IPR046885">
    <property type="entry name" value="MnmA-like_C"/>
</dbReference>
<dbReference type="InterPro" id="IPR046884">
    <property type="entry name" value="MnmA-like_central"/>
</dbReference>
<dbReference type="InterPro" id="IPR023382">
    <property type="entry name" value="MnmA-like_central_sf"/>
</dbReference>
<dbReference type="InterPro" id="IPR014729">
    <property type="entry name" value="Rossmann-like_a/b/a_fold"/>
</dbReference>
<dbReference type="NCBIfam" id="NF001138">
    <property type="entry name" value="PRK00143.1"/>
    <property type="match status" value="1"/>
</dbReference>
<dbReference type="NCBIfam" id="TIGR00420">
    <property type="entry name" value="trmU"/>
    <property type="match status" value="1"/>
</dbReference>
<dbReference type="PANTHER" id="PTHR11933:SF5">
    <property type="entry name" value="MITOCHONDRIAL TRNA-SPECIFIC 2-THIOURIDYLASE 1"/>
    <property type="match status" value="1"/>
</dbReference>
<dbReference type="PANTHER" id="PTHR11933">
    <property type="entry name" value="TRNA 5-METHYLAMINOMETHYL-2-THIOURIDYLATE -METHYLTRANSFERASE"/>
    <property type="match status" value="1"/>
</dbReference>
<dbReference type="Pfam" id="PF03054">
    <property type="entry name" value="tRNA_Me_trans"/>
    <property type="match status" value="1"/>
</dbReference>
<dbReference type="Pfam" id="PF20258">
    <property type="entry name" value="tRNA_Me_trans_C"/>
    <property type="match status" value="1"/>
</dbReference>
<dbReference type="Pfam" id="PF20259">
    <property type="entry name" value="tRNA_Me_trans_M"/>
    <property type="match status" value="1"/>
</dbReference>
<dbReference type="SUPFAM" id="SSF52402">
    <property type="entry name" value="Adenine nucleotide alpha hydrolases-like"/>
    <property type="match status" value="1"/>
</dbReference>
<feature type="chain" id="PRO_0000349574" description="tRNA-specific 2-thiouridylase MnmA">
    <location>
        <begin position="1"/>
        <end position="358"/>
    </location>
</feature>
<feature type="region of interest" description="Interaction with target base in tRNA" evidence="1">
    <location>
        <begin position="95"/>
        <end position="97"/>
    </location>
</feature>
<feature type="region of interest" description="Interaction with tRNA" evidence="1">
    <location>
        <begin position="144"/>
        <end position="146"/>
    </location>
</feature>
<feature type="region of interest" description="Interaction with tRNA" evidence="1">
    <location>
        <begin position="301"/>
        <end position="302"/>
    </location>
</feature>
<feature type="active site" description="Nucleophile" evidence="1">
    <location>
        <position position="100"/>
    </location>
</feature>
<feature type="active site" description="Cysteine persulfide intermediate" evidence="1">
    <location>
        <position position="194"/>
    </location>
</feature>
<feature type="binding site" evidence="1">
    <location>
        <begin position="8"/>
        <end position="15"/>
    </location>
    <ligand>
        <name>ATP</name>
        <dbReference type="ChEBI" id="CHEBI:30616"/>
    </ligand>
</feature>
<feature type="binding site" evidence="1">
    <location>
        <position position="35"/>
    </location>
    <ligand>
        <name>ATP</name>
        <dbReference type="ChEBI" id="CHEBI:30616"/>
    </ligand>
</feature>
<feature type="binding site" evidence="1">
    <location>
        <position position="124"/>
    </location>
    <ligand>
        <name>ATP</name>
        <dbReference type="ChEBI" id="CHEBI:30616"/>
    </ligand>
</feature>
<feature type="site" description="Interaction with tRNA" evidence="1">
    <location>
        <position position="125"/>
    </location>
</feature>
<feature type="site" description="Interaction with tRNA" evidence="1">
    <location>
        <position position="334"/>
    </location>
</feature>
<feature type="disulfide bond" description="Alternate" evidence="1">
    <location>
        <begin position="100"/>
        <end position="194"/>
    </location>
</feature>
<sequence>MRKTVIVAMSGGVDSSVVAYLLKKQGEYNVVGLFMKNWGEQDENGECTATKDFRDVERIAEQLSIPYYTVSFSKEYKERVFSRFLREYANGYTPNPDVLCNREIKFDLLQKKVLELKGDFLATGHYCRGGADGTGLSRGIDPNKDQSYFLCGTPKDALSNVLFPLGGMYKTEVRRIAQEAGLATATKKDSTGICFIGKRPFKSFLEQFVADSPGDIIDFDTQQVVGRHEGAHYYTIGQRRGLNIGGMEKPCYVLSKNMEKNIVYIVRGEDHPLLYRQELLAKELNWFVPLQEPMICSAKVRYRSPDEKCSVYPLEDGTVKVIFDVPVKAVTPGQTVAFYQGDICLGGGVIEVPMIHQL</sequence>
<accession>B0B7K3</accession>
<name>MNMA_CHLT2</name>
<evidence type="ECO:0000255" key="1">
    <source>
        <dbReference type="HAMAP-Rule" id="MF_00144"/>
    </source>
</evidence>
<proteinExistence type="inferred from homology"/>
<protein>
    <recommendedName>
        <fullName evidence="1">tRNA-specific 2-thiouridylase MnmA</fullName>
        <ecNumber evidence="1">2.8.1.13</ecNumber>
    </recommendedName>
</protein>
<organism>
    <name type="scientific">Chlamydia trachomatis serovar L2 (strain ATCC VR-902B / DSM 19102 / 434/Bu)</name>
    <dbReference type="NCBI Taxonomy" id="471472"/>
    <lineage>
        <taxon>Bacteria</taxon>
        <taxon>Pseudomonadati</taxon>
        <taxon>Chlamydiota</taxon>
        <taxon>Chlamydiia</taxon>
        <taxon>Chlamydiales</taxon>
        <taxon>Chlamydiaceae</taxon>
        <taxon>Chlamydia/Chlamydophila group</taxon>
        <taxon>Chlamydia</taxon>
    </lineage>
</organism>
<gene>
    <name evidence="1" type="primary">mnmA</name>
    <name type="ordered locus">CTL0539</name>
</gene>